<sequence length="393" mass="44611">MNSSYKSRVFNIISIIMVSMLILSLGAFANNNKAKADSHSKQLEINVKSDKVPQKVKDLAQQQFAGYAKALDKQSNAKTGKYELGEAFKIYKFNGEEDNSYYYPVIKDGKIVYTLTLSPKNKDDLNKSKEDMNYSVKISNFIAKDLDQIKDKNSNITVLTDEKGFYFEEDGKVRLVKATPLPGNVKEKESAKTVSSKLKQELKNTVTPTKVEENEAIQEDQVQYENTLKNFKIREQQFDNSWCAGFSMAALLNATKNTDTYNAHDIMRTLYPEVSEQDLPNCSTFPNQMIEYGKSQGRDIHYQEGVPSYEQVDQLTKDNVGIMILAQSVSQNPNDPHLGHALAVVGNAKINDQEKLIYWNPWDTELSIQDADSSLLHLSFNRDYNWYGSMIGY</sequence>
<organism>
    <name type="scientific">Staphylococcus aureus (strain MSSA476)</name>
    <dbReference type="NCBI Taxonomy" id="282459"/>
    <lineage>
        <taxon>Bacteria</taxon>
        <taxon>Bacillati</taxon>
        <taxon>Bacillota</taxon>
        <taxon>Bacilli</taxon>
        <taxon>Bacillales</taxon>
        <taxon>Staphylococcaceae</taxon>
        <taxon>Staphylococcus</taxon>
    </lineage>
</organism>
<accession>Q6GAG5</accession>
<dbReference type="EC" id="3.4.22.-"/>
<dbReference type="EMBL" id="BX571857">
    <property type="protein sequence ID" value="CAG42758.1"/>
    <property type="molecule type" value="Genomic_DNA"/>
</dbReference>
<dbReference type="RefSeq" id="WP_001089097.1">
    <property type="nucleotide sequence ID" value="NC_002953.3"/>
</dbReference>
<dbReference type="SMR" id="Q6GAG5"/>
<dbReference type="MEROPS" id="C47.002"/>
<dbReference type="KEGG" id="sas:SAS0983"/>
<dbReference type="HOGENOM" id="CLU_069043_0_0_9"/>
<dbReference type="PRO" id="PR:Q6GAG5"/>
<dbReference type="GO" id="GO:0005576">
    <property type="term" value="C:extracellular region"/>
    <property type="evidence" value="ECO:0007669"/>
    <property type="project" value="UniProtKB-SubCell"/>
</dbReference>
<dbReference type="GO" id="GO:0008234">
    <property type="term" value="F:cysteine-type peptidase activity"/>
    <property type="evidence" value="ECO:0007669"/>
    <property type="project" value="UniProtKB-KW"/>
</dbReference>
<dbReference type="GO" id="GO:0006508">
    <property type="term" value="P:proteolysis"/>
    <property type="evidence" value="ECO:0007669"/>
    <property type="project" value="UniProtKB-KW"/>
</dbReference>
<dbReference type="Gene3D" id="3.90.70.10">
    <property type="entry name" value="Cysteine proteinases"/>
    <property type="match status" value="1"/>
</dbReference>
<dbReference type="Gene3D" id="3.10.500.10">
    <property type="entry name" value="Staphopain proregion domain"/>
    <property type="match status" value="1"/>
</dbReference>
<dbReference type="InterPro" id="IPR046350">
    <property type="entry name" value="Cystatin_sf"/>
</dbReference>
<dbReference type="InterPro" id="IPR038765">
    <property type="entry name" value="Papain-like_cys_pep_sf"/>
</dbReference>
<dbReference type="InterPro" id="IPR025660">
    <property type="entry name" value="Pept_his_AS"/>
</dbReference>
<dbReference type="InterPro" id="IPR008750">
    <property type="entry name" value="Peptidase_C47"/>
</dbReference>
<dbReference type="InterPro" id="IPR028076">
    <property type="entry name" value="Staphopain_pro"/>
</dbReference>
<dbReference type="InterPro" id="IPR037155">
    <property type="entry name" value="Staphopain_pro_sf"/>
</dbReference>
<dbReference type="Pfam" id="PF05543">
    <property type="entry name" value="Peptidase_C47"/>
    <property type="match status" value="1"/>
</dbReference>
<dbReference type="Pfam" id="PF14731">
    <property type="entry name" value="Staphopain_pro"/>
    <property type="match status" value="1"/>
</dbReference>
<dbReference type="SUPFAM" id="SSF54403">
    <property type="entry name" value="Cystatin/monellin"/>
    <property type="match status" value="1"/>
</dbReference>
<dbReference type="SUPFAM" id="SSF54001">
    <property type="entry name" value="Cysteine proteinases"/>
    <property type="match status" value="1"/>
</dbReference>
<dbReference type="PROSITE" id="PS00639">
    <property type="entry name" value="THIOL_PROTEASE_HIS"/>
    <property type="match status" value="1"/>
</dbReference>
<keyword id="KW-0378">Hydrolase</keyword>
<keyword id="KW-0645">Protease</keyword>
<keyword id="KW-0964">Secreted</keyword>
<keyword id="KW-0732">Signal</keyword>
<keyword id="KW-0788">Thiol protease</keyword>
<keyword id="KW-0843">Virulence</keyword>
<keyword id="KW-0865">Zymogen</keyword>
<proteinExistence type="inferred from homology"/>
<reference key="1">
    <citation type="journal article" date="2004" name="Proc. Natl. Acad. Sci. U.S.A.">
        <title>Complete genomes of two clinical Staphylococcus aureus strains: evidence for the rapid evolution of virulence and drug resistance.</title>
        <authorList>
            <person name="Holden M.T.G."/>
            <person name="Feil E.J."/>
            <person name="Lindsay J.A."/>
            <person name="Peacock S.J."/>
            <person name="Day N.P.J."/>
            <person name="Enright M.C."/>
            <person name="Foster T.J."/>
            <person name="Moore C.E."/>
            <person name="Hurst L."/>
            <person name="Atkin R."/>
            <person name="Barron A."/>
            <person name="Bason N."/>
            <person name="Bentley S.D."/>
            <person name="Chillingworth C."/>
            <person name="Chillingworth T."/>
            <person name="Churcher C."/>
            <person name="Clark L."/>
            <person name="Corton C."/>
            <person name="Cronin A."/>
            <person name="Doggett J."/>
            <person name="Dowd L."/>
            <person name="Feltwell T."/>
            <person name="Hance Z."/>
            <person name="Harris B."/>
            <person name="Hauser H."/>
            <person name="Holroyd S."/>
            <person name="Jagels K."/>
            <person name="James K.D."/>
            <person name="Lennard N."/>
            <person name="Line A."/>
            <person name="Mayes R."/>
            <person name="Moule S."/>
            <person name="Mungall K."/>
            <person name="Ormond D."/>
            <person name="Quail M.A."/>
            <person name="Rabbinowitsch E."/>
            <person name="Rutherford K.M."/>
            <person name="Sanders M."/>
            <person name="Sharp S."/>
            <person name="Simmonds M."/>
            <person name="Stevens K."/>
            <person name="Whitehead S."/>
            <person name="Barrell B.G."/>
            <person name="Spratt B.G."/>
            <person name="Parkhill J."/>
        </authorList>
    </citation>
    <scope>NUCLEOTIDE SEQUENCE [LARGE SCALE GENOMIC DNA]</scope>
    <source>
        <strain>MSSA476</strain>
    </source>
</reference>
<protein>
    <recommendedName>
        <fullName>Staphopain B</fullName>
        <ecNumber>3.4.22.-</ecNumber>
    </recommendedName>
    <alternativeName>
        <fullName>Staphylococcal cysteine proteinase B</fullName>
    </alternativeName>
    <alternativeName>
        <fullName>Staphylopain B</fullName>
    </alternativeName>
</protein>
<evidence type="ECO:0000250" key="1"/>
<evidence type="ECO:0000250" key="2">
    <source>
        <dbReference type="UniProtKB" id="P0C1S6"/>
    </source>
</evidence>
<evidence type="ECO:0000255" key="3">
    <source>
        <dbReference type="PROSITE-ProRule" id="PRU10089"/>
    </source>
</evidence>
<evidence type="ECO:0000305" key="4"/>
<gene>
    <name type="primary">sspB</name>
    <name type="ordered locus">SAS0983</name>
</gene>
<name>SSPB_STAAS</name>
<comment type="function">
    <text evidence="2">Cysteine protease that plays an important role in the inhibition of host innate immune response. Degrades host elastin, fibrogen, fibronectin and kininogen. Blocks phagocytosis of opsonised S.aureus by neutrophils and monocytes by inducing their death in a proteolytic activity-dependent manner. Decreases surface expression of the 'don't eat me' signal CD31 on neutrophils. Cleaves host galectin-3/LGALS3, thereby inhibiting the neutrophil-activating ability of the lectin.</text>
</comment>
<comment type="activity regulation">
    <text evidence="1">Prematurely activated/folded staphopain B is inhibited by staphostatin B (SspC), which is probably required to protect staphylococcal cytoplasmic proteins from degradation by SspB.</text>
</comment>
<comment type="subunit">
    <text evidence="1">In the cytoplasm, prematurely activated/folded SspB forms a stable non-covalent complex with SspC.</text>
</comment>
<comment type="subcellular location">
    <subcellularLocation>
        <location evidence="1">Secreted</location>
    </subcellularLocation>
</comment>
<comment type="PTM">
    <text evidence="1">Proteolytically cleaved by staphylococcal serine protease (SspA).</text>
</comment>
<comment type="miscellaneous">
    <text evidence="1">The cascade of activation of extracellular proteases proceeds from the metalloprotease aureolysin (aur), through SspA to SspB.</text>
</comment>
<comment type="similarity">
    <text evidence="4">Belongs to the peptidase C47 family.</text>
</comment>
<feature type="signal peptide" evidence="1">
    <location>
        <begin position="1"/>
        <end position="36"/>
    </location>
</feature>
<feature type="propeptide" id="PRO_0000026569" evidence="1">
    <location>
        <begin position="37"/>
        <end position="219"/>
    </location>
</feature>
<feature type="chain" id="PRO_0000026570" description="Staphopain B">
    <location>
        <begin position="220"/>
        <end position="393"/>
    </location>
</feature>
<feature type="active site" evidence="3">
    <location>
        <position position="243"/>
    </location>
</feature>
<feature type="active site" evidence="3">
    <location>
        <position position="340"/>
    </location>
</feature>
<feature type="active site" evidence="3">
    <location>
        <position position="360"/>
    </location>
</feature>
<feature type="site" description="Cleavage; by SspA" evidence="1">
    <location>
        <begin position="219"/>
        <end position="220"/>
    </location>
</feature>